<evidence type="ECO:0000250" key="1"/>
<evidence type="ECO:0000305" key="2"/>
<proteinExistence type="inferred from homology"/>
<keyword id="KW-0975">Bacterial flagellum</keyword>
<keyword id="KW-1185">Reference proteome</keyword>
<dbReference type="EMBL" id="AE005174">
    <property type="protein sequence ID" value="AAG55824.1"/>
    <property type="molecule type" value="Genomic_DNA"/>
</dbReference>
<dbReference type="EMBL" id="BA000007">
    <property type="protein sequence ID" value="BAB34879.1"/>
    <property type="molecule type" value="Genomic_DNA"/>
</dbReference>
<dbReference type="PIR" id="D85670">
    <property type="entry name" value="D85670"/>
</dbReference>
<dbReference type="PIR" id="H90810">
    <property type="entry name" value="H90810"/>
</dbReference>
<dbReference type="RefSeq" id="NP_309483.1">
    <property type="nucleotide sequence ID" value="NC_002695.1"/>
</dbReference>
<dbReference type="RefSeq" id="WP_000625837.1">
    <property type="nucleotide sequence ID" value="NZ_VOAI01000018.1"/>
</dbReference>
<dbReference type="SMR" id="P0ABX7"/>
<dbReference type="STRING" id="155864.Z1716"/>
<dbReference type="GeneID" id="86863573"/>
<dbReference type="GeneID" id="912784"/>
<dbReference type="KEGG" id="ece:Z1716"/>
<dbReference type="KEGG" id="ecs:ECs_1456"/>
<dbReference type="PATRIC" id="fig|386585.9.peg.1557"/>
<dbReference type="eggNOG" id="COG4786">
    <property type="taxonomic scope" value="Bacteria"/>
</dbReference>
<dbReference type="HOGENOM" id="CLU_013687_0_1_6"/>
<dbReference type="OMA" id="MIRSLWT"/>
<dbReference type="Proteomes" id="UP000000558">
    <property type="component" value="Chromosome"/>
</dbReference>
<dbReference type="Proteomes" id="UP000002519">
    <property type="component" value="Chromosome"/>
</dbReference>
<dbReference type="GO" id="GO:0009426">
    <property type="term" value="C:bacterial-type flagellum basal body, distal rod"/>
    <property type="evidence" value="ECO:0007669"/>
    <property type="project" value="InterPro"/>
</dbReference>
<dbReference type="GO" id="GO:0071978">
    <property type="term" value="P:bacterial-type flagellum-dependent swarming motility"/>
    <property type="evidence" value="ECO:0007669"/>
    <property type="project" value="TreeGrafter"/>
</dbReference>
<dbReference type="InterPro" id="IPR001444">
    <property type="entry name" value="Flag_bb_rod_N"/>
</dbReference>
<dbReference type="InterPro" id="IPR019776">
    <property type="entry name" value="Flagellar_basal_body_rod_CS"/>
</dbReference>
<dbReference type="InterPro" id="IPR020013">
    <property type="entry name" value="Flagellar_FlgE/F/G"/>
</dbReference>
<dbReference type="InterPro" id="IPR010930">
    <property type="entry name" value="Flg_bb/hook_C_dom"/>
</dbReference>
<dbReference type="InterPro" id="IPR037925">
    <property type="entry name" value="FlgE/F/G-like"/>
</dbReference>
<dbReference type="InterPro" id="IPR012834">
    <property type="entry name" value="FlgG_G_neg"/>
</dbReference>
<dbReference type="InterPro" id="IPR053967">
    <property type="entry name" value="LlgE_F_G-like_D1"/>
</dbReference>
<dbReference type="NCBIfam" id="TIGR03506">
    <property type="entry name" value="FlgEFG_subfam"/>
    <property type="match status" value="2"/>
</dbReference>
<dbReference type="NCBIfam" id="TIGR02488">
    <property type="entry name" value="flgG_G_neg"/>
    <property type="match status" value="1"/>
</dbReference>
<dbReference type="PANTHER" id="PTHR30435:SF19">
    <property type="entry name" value="FLAGELLAR BASAL-BODY ROD PROTEIN FLGG"/>
    <property type="match status" value="1"/>
</dbReference>
<dbReference type="PANTHER" id="PTHR30435">
    <property type="entry name" value="FLAGELLAR PROTEIN"/>
    <property type="match status" value="1"/>
</dbReference>
<dbReference type="Pfam" id="PF00460">
    <property type="entry name" value="Flg_bb_rod"/>
    <property type="match status" value="1"/>
</dbReference>
<dbReference type="Pfam" id="PF06429">
    <property type="entry name" value="Flg_bbr_C"/>
    <property type="match status" value="1"/>
</dbReference>
<dbReference type="Pfam" id="PF22692">
    <property type="entry name" value="LlgE_F_G_D1"/>
    <property type="match status" value="1"/>
</dbReference>
<dbReference type="SUPFAM" id="SSF117143">
    <property type="entry name" value="Flagellar hook protein flgE"/>
    <property type="match status" value="1"/>
</dbReference>
<dbReference type="PROSITE" id="PS00588">
    <property type="entry name" value="FLAGELLA_BB_ROD"/>
    <property type="match status" value="1"/>
</dbReference>
<organism>
    <name type="scientific">Escherichia coli O157:H7</name>
    <dbReference type="NCBI Taxonomy" id="83334"/>
    <lineage>
        <taxon>Bacteria</taxon>
        <taxon>Pseudomonadati</taxon>
        <taxon>Pseudomonadota</taxon>
        <taxon>Gammaproteobacteria</taxon>
        <taxon>Enterobacterales</taxon>
        <taxon>Enterobacteriaceae</taxon>
        <taxon>Escherichia</taxon>
    </lineage>
</organism>
<name>FLGG_ECO57</name>
<comment type="subunit">
    <text evidence="1">The basal body constitutes a major portion of the flagellar organelle and consists of four rings (L,P,S, and M) mounted on a central rod. The rod consists of about 26 subunits of FlgG in the distal portion, and FlgB, FlgC and FlgF are thought to build up the proximal portion of the rod with about 6 subunits each (By similarity).</text>
</comment>
<comment type="subcellular location">
    <subcellularLocation>
        <location evidence="1">Bacterial flagellum basal body</location>
    </subcellularLocation>
</comment>
<comment type="similarity">
    <text evidence="2">Belongs to the flagella basal body rod proteins family.</text>
</comment>
<protein>
    <recommendedName>
        <fullName>Flagellar basal-body rod protein FlgG</fullName>
    </recommendedName>
    <alternativeName>
        <fullName>Distal rod protein</fullName>
    </alternativeName>
</protein>
<sequence>MISSLWIAKTGLDAQQTNMDVIANNLANVSTNGFKRQRAVFEDLLYQTIRQPGAQSSEQTTLPSGLQIGTGVRPVATERLHSQGNLSQTNNSKDVAIKGQGFFQVMLPDGSSAYTRDGSFQVDQNGQLVTAGGFQVQPAITIPANALSITIGRDGVVSVTQQGQAAPVQVGQLNLTTFMNDTGLESIGENLYTETQSSGAPNESTPGLNGAGLLYQGYVETSNVNVAEELVNMIQVQRAYEINSKAVSTTDQMLQKLTQL</sequence>
<gene>
    <name type="primary">flgG</name>
    <name type="ordered locus">Z1716</name>
    <name type="ordered locus">ECs1456</name>
</gene>
<feature type="chain" id="PRO_0000180850" description="Flagellar basal-body rod protein FlgG">
    <location>
        <begin position="1"/>
        <end position="260"/>
    </location>
</feature>
<accession>P0ABX7</accession>
<accession>P75939</accession>
<reference key="1">
    <citation type="journal article" date="2001" name="Nature">
        <title>Genome sequence of enterohaemorrhagic Escherichia coli O157:H7.</title>
        <authorList>
            <person name="Perna N.T."/>
            <person name="Plunkett G. III"/>
            <person name="Burland V."/>
            <person name="Mau B."/>
            <person name="Glasner J.D."/>
            <person name="Rose D.J."/>
            <person name="Mayhew G.F."/>
            <person name="Evans P.S."/>
            <person name="Gregor J."/>
            <person name="Kirkpatrick H.A."/>
            <person name="Posfai G."/>
            <person name="Hackett J."/>
            <person name="Klink S."/>
            <person name="Boutin A."/>
            <person name="Shao Y."/>
            <person name="Miller L."/>
            <person name="Grotbeck E.J."/>
            <person name="Davis N.W."/>
            <person name="Lim A."/>
            <person name="Dimalanta E.T."/>
            <person name="Potamousis K."/>
            <person name="Apodaca J."/>
            <person name="Anantharaman T.S."/>
            <person name="Lin J."/>
            <person name="Yen G."/>
            <person name="Schwartz D.C."/>
            <person name="Welch R.A."/>
            <person name="Blattner F.R."/>
        </authorList>
    </citation>
    <scope>NUCLEOTIDE SEQUENCE [LARGE SCALE GENOMIC DNA]</scope>
    <source>
        <strain>O157:H7 / EDL933 / ATCC 700927 / EHEC</strain>
    </source>
</reference>
<reference key="2">
    <citation type="journal article" date="2001" name="DNA Res.">
        <title>Complete genome sequence of enterohemorrhagic Escherichia coli O157:H7 and genomic comparison with a laboratory strain K-12.</title>
        <authorList>
            <person name="Hayashi T."/>
            <person name="Makino K."/>
            <person name="Ohnishi M."/>
            <person name="Kurokawa K."/>
            <person name="Ishii K."/>
            <person name="Yokoyama K."/>
            <person name="Han C.-G."/>
            <person name="Ohtsubo E."/>
            <person name="Nakayama K."/>
            <person name="Murata T."/>
            <person name="Tanaka M."/>
            <person name="Tobe T."/>
            <person name="Iida T."/>
            <person name="Takami H."/>
            <person name="Honda T."/>
            <person name="Sasakawa C."/>
            <person name="Ogasawara N."/>
            <person name="Yasunaga T."/>
            <person name="Kuhara S."/>
            <person name="Shiba T."/>
            <person name="Hattori M."/>
            <person name="Shinagawa H."/>
        </authorList>
    </citation>
    <scope>NUCLEOTIDE SEQUENCE [LARGE SCALE GENOMIC DNA]</scope>
    <source>
        <strain>O157:H7 / Sakai / RIMD 0509952 / EHEC</strain>
    </source>
</reference>